<keyword id="KW-0217">Developmental protein</keyword>
<keyword id="KW-0221">Differentiation</keyword>
<keyword id="KW-0238">DNA-binding</keyword>
<keyword id="KW-0479">Metal-binding</keyword>
<keyword id="KW-0524">Neurogenesis</keyword>
<keyword id="KW-0539">Nucleus</keyword>
<keyword id="KW-1185">Reference proteome</keyword>
<keyword id="KW-0677">Repeat</keyword>
<keyword id="KW-0678">Repressor</keyword>
<keyword id="KW-0804">Transcription</keyword>
<keyword id="KW-0805">Transcription regulation</keyword>
<keyword id="KW-0862">Zinc</keyword>
<keyword id="KW-0863">Zinc-finger</keyword>
<evidence type="ECO:0000250" key="1"/>
<evidence type="ECO:0000255" key="2">
    <source>
        <dbReference type="PROSITE-ProRule" id="PRU00042"/>
    </source>
</evidence>
<evidence type="ECO:0000305" key="3"/>
<feature type="chain" id="PRO_0000295124" description="Fez family zinc finger protein 2">
    <location>
        <begin position="1"/>
        <end position="435"/>
    </location>
</feature>
<feature type="zinc finger region" description="C2H2-type 1" evidence="2">
    <location>
        <begin position="254"/>
        <end position="276"/>
    </location>
</feature>
<feature type="zinc finger region" description="C2H2-type 2" evidence="2">
    <location>
        <begin position="282"/>
        <end position="304"/>
    </location>
</feature>
<feature type="zinc finger region" description="C2H2-type 3" evidence="2">
    <location>
        <begin position="310"/>
        <end position="332"/>
    </location>
</feature>
<feature type="zinc finger region" description="C2H2-type 4" evidence="2">
    <location>
        <begin position="338"/>
        <end position="360"/>
    </location>
</feature>
<feature type="zinc finger region" description="C2H2-type 5" evidence="2">
    <location>
        <begin position="366"/>
        <end position="388"/>
    </location>
</feature>
<feature type="zinc finger region" description="C2H2-type 6" evidence="2">
    <location>
        <begin position="394"/>
        <end position="417"/>
    </location>
</feature>
<feature type="short sequence motif" description="Engrailed homology 1 repressor" evidence="1">
    <location>
        <begin position="27"/>
        <end position="42"/>
    </location>
</feature>
<gene>
    <name type="primary">fezf2</name>
    <name type="ORF">TGas068o03.1</name>
</gene>
<accession>Q28G88</accession>
<comment type="function">
    <text evidence="1">Transcription repressor. Component of the regulatory cascade that controls the development of dopaminergic (DA) and serotonergic (5HT) neurons (By similarity).</text>
</comment>
<comment type="subcellular location">
    <subcellularLocation>
        <location evidence="1">Nucleus</location>
    </subcellularLocation>
</comment>
<comment type="similarity">
    <text evidence="3">Belongs to the krueppel C2H2-type zinc-finger protein family.</text>
</comment>
<sequence>MAAPLETVMTPCQRFDGRNGASATPKSLAFSIERIMAKTSEPKAAAFQPSQGLDPGAKKMLNLCSPLPCMIPIQSLAYDVHSKALLNYSELWKSSLRGSVCSPSGLCKSNCGICCKNDLNMGHTVLPGSRVIKPQVINQTVGLPTNGSLYYFNYLDSSFHPPEILSGQLLSSSLINAQSQATLSAQQKLFLLENAKLSGLAPEKFPNPQYPHKERLPGQLDQVMKENSALSADRSGKIHSKLGANSAEGKPKIFTCEVCGKVFNAHYNLTRHMPVHTGARPFVCKVCGKGFRQASTLCRHKIIHTQEKPHKCNQCGKAFNRSSTLNTHIRIHAGYKPFVCEFCGKGFHQKGNYKNHKLTHSGEKQYKCTICNKAFHQIYNLTFHMHTHNDKKPFTCGTCGKGFCRNFDLKKHVRKLHDNVSSSCSLKEISRTGQS</sequence>
<protein>
    <recommendedName>
        <fullName>Fez family zinc finger protein 2</fullName>
    </recommendedName>
</protein>
<reference key="1">
    <citation type="submission" date="2006-10" db="EMBL/GenBank/DDBJ databases">
        <authorList>
            <consortium name="Sanger Xenopus tropicalis EST/cDNA project"/>
        </authorList>
    </citation>
    <scope>NUCLEOTIDE SEQUENCE [LARGE SCALE MRNA]</scope>
    <source>
        <tissue>Gastrula</tissue>
    </source>
</reference>
<reference key="2">
    <citation type="submission" date="2007-03" db="EMBL/GenBank/DDBJ databases">
        <authorList>
            <consortium name="NIH - Xenopus Gene Collection (XGC) project"/>
        </authorList>
    </citation>
    <scope>NUCLEOTIDE SEQUENCE [LARGE SCALE MRNA]</scope>
    <source>
        <tissue>Brain</tissue>
    </source>
</reference>
<dbReference type="EMBL" id="CR761501">
    <property type="protein sequence ID" value="CAJ83894.1"/>
    <property type="molecule type" value="mRNA"/>
</dbReference>
<dbReference type="EMBL" id="BC136188">
    <property type="protein sequence ID" value="AAI36189.1"/>
    <property type="molecule type" value="mRNA"/>
</dbReference>
<dbReference type="RefSeq" id="NP_001016305.1">
    <property type="nucleotide sequence ID" value="NM_001016305.3"/>
</dbReference>
<dbReference type="RefSeq" id="XP_012816536.2">
    <property type="nucleotide sequence ID" value="XM_012961082.3"/>
</dbReference>
<dbReference type="SMR" id="Q28G88"/>
<dbReference type="FunCoup" id="Q28G88">
    <property type="interactions" value="213"/>
</dbReference>
<dbReference type="STRING" id="8364.ENSXETP00000023472"/>
<dbReference type="PaxDb" id="8364-ENSXETP00000048138"/>
<dbReference type="DNASU" id="549059"/>
<dbReference type="GeneID" id="549059"/>
<dbReference type="KEGG" id="xtr:549059"/>
<dbReference type="AGR" id="Xenbase:XB-GENE-1006432"/>
<dbReference type="CTD" id="55079"/>
<dbReference type="Xenbase" id="XB-GENE-1006432">
    <property type="gene designation" value="fezf2"/>
</dbReference>
<dbReference type="eggNOG" id="KOG1721">
    <property type="taxonomic scope" value="Eukaryota"/>
</dbReference>
<dbReference type="InParanoid" id="Q28G88"/>
<dbReference type="OMA" id="KHKNFTC"/>
<dbReference type="OrthoDB" id="5062908at2759"/>
<dbReference type="Proteomes" id="UP000008143">
    <property type="component" value="Chromosome 4"/>
</dbReference>
<dbReference type="Bgee" id="ENSXETG00000022248">
    <property type="expression patterns" value="Expressed in neurula embryo and 5 other cell types or tissues"/>
</dbReference>
<dbReference type="GO" id="GO:0005634">
    <property type="term" value="C:nucleus"/>
    <property type="evidence" value="ECO:0007669"/>
    <property type="project" value="UniProtKB-SubCell"/>
</dbReference>
<dbReference type="GO" id="GO:0003677">
    <property type="term" value="F:DNA binding"/>
    <property type="evidence" value="ECO:0007669"/>
    <property type="project" value="UniProtKB-KW"/>
</dbReference>
<dbReference type="GO" id="GO:0008270">
    <property type="term" value="F:zinc ion binding"/>
    <property type="evidence" value="ECO:0007669"/>
    <property type="project" value="UniProtKB-KW"/>
</dbReference>
<dbReference type="GO" id="GO:0030154">
    <property type="term" value="P:cell differentiation"/>
    <property type="evidence" value="ECO:0007669"/>
    <property type="project" value="UniProtKB-KW"/>
</dbReference>
<dbReference type="GO" id="GO:0007399">
    <property type="term" value="P:nervous system development"/>
    <property type="evidence" value="ECO:0007669"/>
    <property type="project" value="UniProtKB-KW"/>
</dbReference>
<dbReference type="FunFam" id="3.30.160.60:FF:000103">
    <property type="entry name" value="FEZ family zinc finger 1"/>
    <property type="match status" value="1"/>
</dbReference>
<dbReference type="FunFam" id="3.30.160.60:FF:000251">
    <property type="entry name" value="FEZ family zinc finger 2"/>
    <property type="match status" value="1"/>
</dbReference>
<dbReference type="FunFam" id="3.30.160.60:FF:000227">
    <property type="entry name" value="fez family zinc finger protein 1"/>
    <property type="match status" value="1"/>
</dbReference>
<dbReference type="FunFam" id="3.30.160.60:FF:000164">
    <property type="entry name" value="Fez family zinc finger protein 2"/>
    <property type="match status" value="1"/>
</dbReference>
<dbReference type="FunFam" id="3.30.160.60:FF:000194">
    <property type="entry name" value="Fez family zinc finger protein 2"/>
    <property type="match status" value="1"/>
</dbReference>
<dbReference type="FunFam" id="3.30.160.60:FF:000863">
    <property type="entry name" value="fez family zinc finger protein 2"/>
    <property type="match status" value="1"/>
</dbReference>
<dbReference type="Gene3D" id="3.30.160.60">
    <property type="entry name" value="Classic Zinc Finger"/>
    <property type="match status" value="6"/>
</dbReference>
<dbReference type="InterPro" id="IPR036236">
    <property type="entry name" value="Znf_C2H2_sf"/>
</dbReference>
<dbReference type="InterPro" id="IPR013087">
    <property type="entry name" value="Znf_C2H2_type"/>
</dbReference>
<dbReference type="PANTHER" id="PTHR24394">
    <property type="entry name" value="ZINC FINGER PROTEIN"/>
    <property type="match status" value="1"/>
</dbReference>
<dbReference type="PANTHER" id="PTHR24394:SF48">
    <property type="entry name" value="ZINC FINGER PROTEIN 771"/>
    <property type="match status" value="1"/>
</dbReference>
<dbReference type="Pfam" id="PF00096">
    <property type="entry name" value="zf-C2H2"/>
    <property type="match status" value="5"/>
</dbReference>
<dbReference type="Pfam" id="PF13912">
    <property type="entry name" value="zf-C2H2_6"/>
    <property type="match status" value="1"/>
</dbReference>
<dbReference type="SMART" id="SM00355">
    <property type="entry name" value="ZnF_C2H2"/>
    <property type="match status" value="6"/>
</dbReference>
<dbReference type="SUPFAM" id="SSF57667">
    <property type="entry name" value="beta-beta-alpha zinc fingers"/>
    <property type="match status" value="3"/>
</dbReference>
<dbReference type="PROSITE" id="PS00028">
    <property type="entry name" value="ZINC_FINGER_C2H2_1"/>
    <property type="match status" value="6"/>
</dbReference>
<dbReference type="PROSITE" id="PS50157">
    <property type="entry name" value="ZINC_FINGER_C2H2_2"/>
    <property type="match status" value="6"/>
</dbReference>
<name>FEZF2_XENTR</name>
<proteinExistence type="evidence at transcript level"/>
<organism>
    <name type="scientific">Xenopus tropicalis</name>
    <name type="common">Western clawed frog</name>
    <name type="synonym">Silurana tropicalis</name>
    <dbReference type="NCBI Taxonomy" id="8364"/>
    <lineage>
        <taxon>Eukaryota</taxon>
        <taxon>Metazoa</taxon>
        <taxon>Chordata</taxon>
        <taxon>Craniata</taxon>
        <taxon>Vertebrata</taxon>
        <taxon>Euteleostomi</taxon>
        <taxon>Amphibia</taxon>
        <taxon>Batrachia</taxon>
        <taxon>Anura</taxon>
        <taxon>Pipoidea</taxon>
        <taxon>Pipidae</taxon>
        <taxon>Xenopodinae</taxon>
        <taxon>Xenopus</taxon>
        <taxon>Silurana</taxon>
    </lineage>
</organism>